<feature type="chain" id="PRO_0000155233" description="Thymidylate kinase">
    <location>
        <begin position="1"/>
        <end position="208"/>
    </location>
</feature>
<feature type="binding site" evidence="1">
    <location>
        <begin position="10"/>
        <end position="17"/>
    </location>
    <ligand>
        <name>ATP</name>
        <dbReference type="ChEBI" id="CHEBI:30616"/>
    </ligand>
</feature>
<organism>
    <name type="scientific">Bacillus cereus (strain ATCC 14579 / DSM 31 / CCUG 7414 / JCM 2152 / NBRC 15305 / NCIMB 9373 / NCTC 2599 / NRRL B-3711)</name>
    <dbReference type="NCBI Taxonomy" id="226900"/>
    <lineage>
        <taxon>Bacteria</taxon>
        <taxon>Bacillati</taxon>
        <taxon>Bacillota</taxon>
        <taxon>Bacilli</taxon>
        <taxon>Bacillales</taxon>
        <taxon>Bacillaceae</taxon>
        <taxon>Bacillus</taxon>
        <taxon>Bacillus cereus group</taxon>
    </lineage>
</organism>
<protein>
    <recommendedName>
        <fullName evidence="1">Thymidylate kinase</fullName>
        <ecNumber evidence="1">2.7.4.9</ecNumber>
    </recommendedName>
    <alternativeName>
        <fullName evidence="1">dTMP kinase</fullName>
    </alternativeName>
</protein>
<gene>
    <name evidence="1" type="primary">tmk</name>
    <name type="ordered locus">BC_0036</name>
</gene>
<reference key="1">
    <citation type="journal article" date="2003" name="Nature">
        <title>Genome sequence of Bacillus cereus and comparative analysis with Bacillus anthracis.</title>
        <authorList>
            <person name="Ivanova N."/>
            <person name="Sorokin A."/>
            <person name="Anderson I."/>
            <person name="Galleron N."/>
            <person name="Candelon B."/>
            <person name="Kapatral V."/>
            <person name="Bhattacharyya A."/>
            <person name="Reznik G."/>
            <person name="Mikhailova N."/>
            <person name="Lapidus A."/>
            <person name="Chu L."/>
            <person name="Mazur M."/>
            <person name="Goltsman E."/>
            <person name="Larsen N."/>
            <person name="D'Souza M."/>
            <person name="Walunas T."/>
            <person name="Grechkin Y."/>
            <person name="Pusch G."/>
            <person name="Haselkorn R."/>
            <person name="Fonstein M."/>
            <person name="Ehrlich S.D."/>
            <person name="Overbeek R."/>
            <person name="Kyrpides N.C."/>
        </authorList>
    </citation>
    <scope>NUCLEOTIDE SEQUENCE [LARGE SCALE GENOMIC DNA]</scope>
    <source>
        <strain>ATCC 14579 / DSM 31 / CCUG 7414 / JCM 2152 / NBRC 15305 / NCIMB 9373 / NCTC 2599 / NRRL B-3711</strain>
    </source>
</reference>
<dbReference type="EC" id="2.7.4.9" evidence="1"/>
<dbReference type="EMBL" id="AE016877">
    <property type="protein sequence ID" value="AAP07134.1"/>
    <property type="molecule type" value="Genomic_DNA"/>
</dbReference>
<dbReference type="RefSeq" id="NP_829933.1">
    <property type="nucleotide sequence ID" value="NC_004722.1"/>
</dbReference>
<dbReference type="RefSeq" id="WP_000677216.1">
    <property type="nucleotide sequence ID" value="NZ_CP138336.1"/>
</dbReference>
<dbReference type="SMR" id="Q81JB5"/>
<dbReference type="STRING" id="226900.BC_0036"/>
<dbReference type="KEGG" id="bce:BC0036"/>
<dbReference type="PATRIC" id="fig|226900.8.peg.52"/>
<dbReference type="HOGENOM" id="CLU_049131_0_2_9"/>
<dbReference type="OrthoDB" id="9774907at2"/>
<dbReference type="Proteomes" id="UP000001417">
    <property type="component" value="Chromosome"/>
</dbReference>
<dbReference type="GO" id="GO:0005737">
    <property type="term" value="C:cytoplasm"/>
    <property type="evidence" value="ECO:0000318"/>
    <property type="project" value="GO_Central"/>
</dbReference>
<dbReference type="GO" id="GO:0005829">
    <property type="term" value="C:cytosol"/>
    <property type="evidence" value="ECO:0000318"/>
    <property type="project" value="GO_Central"/>
</dbReference>
<dbReference type="GO" id="GO:0005524">
    <property type="term" value="F:ATP binding"/>
    <property type="evidence" value="ECO:0007669"/>
    <property type="project" value="UniProtKB-UniRule"/>
</dbReference>
<dbReference type="GO" id="GO:0004798">
    <property type="term" value="F:dTMP kinase activity"/>
    <property type="evidence" value="ECO:0000318"/>
    <property type="project" value="GO_Central"/>
</dbReference>
<dbReference type="GO" id="GO:0006233">
    <property type="term" value="P:dTDP biosynthetic process"/>
    <property type="evidence" value="ECO:0000318"/>
    <property type="project" value="GO_Central"/>
</dbReference>
<dbReference type="GO" id="GO:0006235">
    <property type="term" value="P:dTTP biosynthetic process"/>
    <property type="evidence" value="ECO:0000318"/>
    <property type="project" value="GO_Central"/>
</dbReference>
<dbReference type="GO" id="GO:0006227">
    <property type="term" value="P:dUDP biosynthetic process"/>
    <property type="evidence" value="ECO:0000318"/>
    <property type="project" value="GO_Central"/>
</dbReference>
<dbReference type="CDD" id="cd01672">
    <property type="entry name" value="TMPK"/>
    <property type="match status" value="1"/>
</dbReference>
<dbReference type="FunFam" id="3.40.50.300:FF:000225">
    <property type="entry name" value="Thymidylate kinase"/>
    <property type="match status" value="1"/>
</dbReference>
<dbReference type="Gene3D" id="3.40.50.300">
    <property type="entry name" value="P-loop containing nucleotide triphosphate hydrolases"/>
    <property type="match status" value="1"/>
</dbReference>
<dbReference type="HAMAP" id="MF_00165">
    <property type="entry name" value="Thymidylate_kinase"/>
    <property type="match status" value="1"/>
</dbReference>
<dbReference type="InterPro" id="IPR027417">
    <property type="entry name" value="P-loop_NTPase"/>
</dbReference>
<dbReference type="InterPro" id="IPR039430">
    <property type="entry name" value="Thymidylate_kin-like_dom"/>
</dbReference>
<dbReference type="InterPro" id="IPR018095">
    <property type="entry name" value="Thymidylate_kin_CS"/>
</dbReference>
<dbReference type="InterPro" id="IPR018094">
    <property type="entry name" value="Thymidylate_kinase"/>
</dbReference>
<dbReference type="NCBIfam" id="TIGR00041">
    <property type="entry name" value="DTMP_kinase"/>
    <property type="match status" value="1"/>
</dbReference>
<dbReference type="PANTHER" id="PTHR10344">
    <property type="entry name" value="THYMIDYLATE KINASE"/>
    <property type="match status" value="1"/>
</dbReference>
<dbReference type="PANTHER" id="PTHR10344:SF4">
    <property type="entry name" value="UMP-CMP KINASE 2, MITOCHONDRIAL"/>
    <property type="match status" value="1"/>
</dbReference>
<dbReference type="Pfam" id="PF02223">
    <property type="entry name" value="Thymidylate_kin"/>
    <property type="match status" value="1"/>
</dbReference>
<dbReference type="SUPFAM" id="SSF52540">
    <property type="entry name" value="P-loop containing nucleoside triphosphate hydrolases"/>
    <property type="match status" value="1"/>
</dbReference>
<dbReference type="PROSITE" id="PS01331">
    <property type="entry name" value="THYMIDYLATE_KINASE"/>
    <property type="match status" value="1"/>
</dbReference>
<comment type="function">
    <text evidence="1">Phosphorylation of dTMP to form dTDP in both de novo and salvage pathways of dTTP synthesis.</text>
</comment>
<comment type="catalytic activity">
    <reaction evidence="1">
        <text>dTMP + ATP = dTDP + ADP</text>
        <dbReference type="Rhea" id="RHEA:13517"/>
        <dbReference type="ChEBI" id="CHEBI:30616"/>
        <dbReference type="ChEBI" id="CHEBI:58369"/>
        <dbReference type="ChEBI" id="CHEBI:63528"/>
        <dbReference type="ChEBI" id="CHEBI:456216"/>
        <dbReference type="EC" id="2.7.4.9"/>
    </reaction>
</comment>
<comment type="similarity">
    <text evidence="1">Belongs to the thymidylate kinase family.</text>
</comment>
<sequence length="208" mass="23819">MKGLFVTIEGPEGSGKTTLIKSLLPYFEQKAQKVMATREPGGIAISEDIRTILHKQEYTMMEARTEALLYAAARRQHLVEKVMPALNEDYLVLCDRFIDSSLAYQGYARGLGMDKIFEINRFATEDCMPSLTIYLDIEPEVGLARIEKDAGREVNRLDMEDISFHKRVREGYLQVVERFSDRIVLVNADQPMEKLIEEVVQIIEDKLL</sequence>
<keyword id="KW-0067">ATP-binding</keyword>
<keyword id="KW-0418">Kinase</keyword>
<keyword id="KW-0545">Nucleotide biosynthesis</keyword>
<keyword id="KW-0547">Nucleotide-binding</keyword>
<keyword id="KW-1185">Reference proteome</keyword>
<keyword id="KW-0808">Transferase</keyword>
<name>KTHY_BACCR</name>
<accession>Q81JB5</accession>
<proteinExistence type="inferred from homology"/>
<evidence type="ECO:0000255" key="1">
    <source>
        <dbReference type="HAMAP-Rule" id="MF_00165"/>
    </source>
</evidence>